<gene>
    <name type="primary">VSIG10</name>
</gene>
<reference key="1">
    <citation type="journal article" date="2004" name="Nat. Genet.">
        <title>Complete sequencing and characterization of 21,243 full-length human cDNAs.</title>
        <authorList>
            <person name="Ota T."/>
            <person name="Suzuki Y."/>
            <person name="Nishikawa T."/>
            <person name="Otsuki T."/>
            <person name="Sugiyama T."/>
            <person name="Irie R."/>
            <person name="Wakamatsu A."/>
            <person name="Hayashi K."/>
            <person name="Sato H."/>
            <person name="Nagai K."/>
            <person name="Kimura K."/>
            <person name="Makita H."/>
            <person name="Sekine M."/>
            <person name="Obayashi M."/>
            <person name="Nishi T."/>
            <person name="Shibahara T."/>
            <person name="Tanaka T."/>
            <person name="Ishii S."/>
            <person name="Yamamoto J."/>
            <person name="Saito K."/>
            <person name="Kawai Y."/>
            <person name="Isono Y."/>
            <person name="Nakamura Y."/>
            <person name="Nagahari K."/>
            <person name="Murakami K."/>
            <person name="Yasuda T."/>
            <person name="Iwayanagi T."/>
            <person name="Wagatsuma M."/>
            <person name="Shiratori A."/>
            <person name="Sudo H."/>
            <person name="Hosoiri T."/>
            <person name="Kaku Y."/>
            <person name="Kodaira H."/>
            <person name="Kondo H."/>
            <person name="Sugawara M."/>
            <person name="Takahashi M."/>
            <person name="Kanda K."/>
            <person name="Yokoi T."/>
            <person name="Furuya T."/>
            <person name="Kikkawa E."/>
            <person name="Omura Y."/>
            <person name="Abe K."/>
            <person name="Kamihara K."/>
            <person name="Katsuta N."/>
            <person name="Sato K."/>
            <person name="Tanikawa M."/>
            <person name="Yamazaki M."/>
            <person name="Ninomiya K."/>
            <person name="Ishibashi T."/>
            <person name="Yamashita H."/>
            <person name="Murakawa K."/>
            <person name="Fujimori K."/>
            <person name="Tanai H."/>
            <person name="Kimata M."/>
            <person name="Watanabe M."/>
            <person name="Hiraoka S."/>
            <person name="Chiba Y."/>
            <person name="Ishida S."/>
            <person name="Ono Y."/>
            <person name="Takiguchi S."/>
            <person name="Watanabe S."/>
            <person name="Yosida M."/>
            <person name="Hotuta T."/>
            <person name="Kusano J."/>
            <person name="Kanehori K."/>
            <person name="Takahashi-Fujii A."/>
            <person name="Hara H."/>
            <person name="Tanase T.-O."/>
            <person name="Nomura Y."/>
            <person name="Togiya S."/>
            <person name="Komai F."/>
            <person name="Hara R."/>
            <person name="Takeuchi K."/>
            <person name="Arita M."/>
            <person name="Imose N."/>
            <person name="Musashino K."/>
            <person name="Yuuki H."/>
            <person name="Oshima A."/>
            <person name="Sasaki N."/>
            <person name="Aotsuka S."/>
            <person name="Yoshikawa Y."/>
            <person name="Matsunawa H."/>
            <person name="Ichihara T."/>
            <person name="Shiohata N."/>
            <person name="Sano S."/>
            <person name="Moriya S."/>
            <person name="Momiyama H."/>
            <person name="Satoh N."/>
            <person name="Takami S."/>
            <person name="Terashima Y."/>
            <person name="Suzuki O."/>
            <person name="Nakagawa S."/>
            <person name="Senoh A."/>
            <person name="Mizoguchi H."/>
            <person name="Goto Y."/>
            <person name="Shimizu F."/>
            <person name="Wakebe H."/>
            <person name="Hishigaki H."/>
            <person name="Watanabe T."/>
            <person name="Sugiyama A."/>
            <person name="Takemoto M."/>
            <person name="Kawakami B."/>
            <person name="Yamazaki M."/>
            <person name="Watanabe K."/>
            <person name="Kumagai A."/>
            <person name="Itakura S."/>
            <person name="Fukuzumi Y."/>
            <person name="Fujimori Y."/>
            <person name="Komiyama M."/>
            <person name="Tashiro H."/>
            <person name="Tanigami A."/>
            <person name="Fujiwara T."/>
            <person name="Ono T."/>
            <person name="Yamada K."/>
            <person name="Fujii Y."/>
            <person name="Ozaki K."/>
            <person name="Hirao M."/>
            <person name="Ohmori Y."/>
            <person name="Kawabata A."/>
            <person name="Hikiji T."/>
            <person name="Kobatake N."/>
            <person name="Inagaki H."/>
            <person name="Ikema Y."/>
            <person name="Okamoto S."/>
            <person name="Okitani R."/>
            <person name="Kawakami T."/>
            <person name="Noguchi S."/>
            <person name="Itoh T."/>
            <person name="Shigeta K."/>
            <person name="Senba T."/>
            <person name="Matsumura K."/>
            <person name="Nakajima Y."/>
            <person name="Mizuno T."/>
            <person name="Morinaga M."/>
            <person name="Sasaki M."/>
            <person name="Togashi T."/>
            <person name="Oyama M."/>
            <person name="Hata H."/>
            <person name="Watanabe M."/>
            <person name="Komatsu T."/>
            <person name="Mizushima-Sugano J."/>
            <person name="Satoh T."/>
            <person name="Shirai Y."/>
            <person name="Takahashi Y."/>
            <person name="Nakagawa K."/>
            <person name="Okumura K."/>
            <person name="Nagase T."/>
            <person name="Nomura N."/>
            <person name="Kikuchi H."/>
            <person name="Masuho Y."/>
            <person name="Yamashita R."/>
            <person name="Nakai K."/>
            <person name="Yada T."/>
            <person name="Nakamura Y."/>
            <person name="Ohara O."/>
            <person name="Isogai T."/>
            <person name="Sugano S."/>
        </authorList>
    </citation>
    <scope>NUCLEOTIDE SEQUENCE [LARGE SCALE MRNA] (ISOFORM 2)</scope>
    <scope>VARIANT TYR-435</scope>
    <source>
        <tissue>Ileal mucosa</tissue>
    </source>
</reference>
<reference key="2">
    <citation type="journal article" date="2004" name="Genome Res.">
        <title>The status, quality, and expansion of the NIH full-length cDNA project: the Mammalian Gene Collection (MGC).</title>
        <authorList>
            <consortium name="The MGC Project Team"/>
        </authorList>
    </citation>
    <scope>NUCLEOTIDE SEQUENCE [LARGE SCALE MRNA] (ISOFORM 1)</scope>
    <source>
        <tissue>Testis</tissue>
    </source>
</reference>
<dbReference type="EMBL" id="AK000681">
    <property type="protein sequence ID" value="BAA91322.1"/>
    <property type="molecule type" value="mRNA"/>
</dbReference>
<dbReference type="EMBL" id="BC028698">
    <property type="protein sequence ID" value="AAH28698.2"/>
    <property type="molecule type" value="mRNA"/>
</dbReference>
<dbReference type="EMBL" id="BC034471">
    <property type="protein sequence ID" value="AAH34471.1"/>
    <property type="molecule type" value="mRNA"/>
</dbReference>
<dbReference type="CCDS" id="CCDS44992.1">
    <molecule id="Q8N0Z9-1"/>
</dbReference>
<dbReference type="RefSeq" id="NP_061959.2">
    <molecule id="Q8N0Z9-1"/>
    <property type="nucleotide sequence ID" value="NM_019086.5"/>
</dbReference>
<dbReference type="SMR" id="Q8N0Z9"/>
<dbReference type="BioGRID" id="120079">
    <property type="interactions" value="3"/>
</dbReference>
<dbReference type="FunCoup" id="Q8N0Z9">
    <property type="interactions" value="49"/>
</dbReference>
<dbReference type="IntAct" id="Q8N0Z9">
    <property type="interactions" value="1"/>
</dbReference>
<dbReference type="STRING" id="9606.ENSP00000352172"/>
<dbReference type="GlyCosmos" id="Q8N0Z9">
    <property type="glycosylation" value="9 sites, No reported glycans"/>
</dbReference>
<dbReference type="GlyGen" id="Q8N0Z9">
    <property type="glycosylation" value="12 sites, 4 N-linked glycans (5 sites)"/>
</dbReference>
<dbReference type="iPTMnet" id="Q8N0Z9"/>
<dbReference type="PhosphoSitePlus" id="Q8N0Z9"/>
<dbReference type="SwissPalm" id="Q8N0Z9"/>
<dbReference type="BioMuta" id="VSIG10"/>
<dbReference type="DMDM" id="74759757"/>
<dbReference type="jPOST" id="Q8N0Z9"/>
<dbReference type="MassIVE" id="Q8N0Z9"/>
<dbReference type="PaxDb" id="9606-ENSP00000352172"/>
<dbReference type="PeptideAtlas" id="Q8N0Z9"/>
<dbReference type="ProteomicsDB" id="71496">
    <molecule id="Q8N0Z9-1"/>
</dbReference>
<dbReference type="ProteomicsDB" id="71497">
    <molecule id="Q8N0Z9-2"/>
</dbReference>
<dbReference type="TopDownProteomics" id="Q8N0Z9-2">
    <molecule id="Q8N0Z9-2"/>
</dbReference>
<dbReference type="Antibodypedia" id="3044">
    <property type="antibodies" value="32 antibodies from 15 providers"/>
</dbReference>
<dbReference type="DNASU" id="54621"/>
<dbReference type="Ensembl" id="ENST00000359236.10">
    <molecule id="Q8N0Z9-1"/>
    <property type="protein sequence ID" value="ENSP00000352172.5"/>
    <property type="gene ID" value="ENSG00000176834.14"/>
</dbReference>
<dbReference type="GeneID" id="54621"/>
<dbReference type="KEGG" id="hsa:54621"/>
<dbReference type="MANE-Select" id="ENST00000359236.10">
    <property type="protein sequence ID" value="ENSP00000352172.5"/>
    <property type="RefSeq nucleotide sequence ID" value="NM_019086.6"/>
    <property type="RefSeq protein sequence ID" value="NP_061959.2"/>
</dbReference>
<dbReference type="UCSC" id="uc001tws.4">
    <molecule id="Q8N0Z9-1"/>
    <property type="organism name" value="human"/>
</dbReference>
<dbReference type="AGR" id="HGNC:26078"/>
<dbReference type="CTD" id="54621"/>
<dbReference type="GeneCards" id="VSIG10"/>
<dbReference type="HGNC" id="HGNC:26078">
    <property type="gene designation" value="VSIG10"/>
</dbReference>
<dbReference type="HPA" id="ENSG00000176834">
    <property type="expression patterns" value="Low tissue specificity"/>
</dbReference>
<dbReference type="neXtProt" id="NX_Q8N0Z9"/>
<dbReference type="OpenTargets" id="ENSG00000176834"/>
<dbReference type="PharmGKB" id="PA165513585"/>
<dbReference type="VEuPathDB" id="HostDB:ENSG00000176834"/>
<dbReference type="eggNOG" id="ENOG502R53I">
    <property type="taxonomic scope" value="Eukaryota"/>
</dbReference>
<dbReference type="GeneTree" id="ENSGT00940000159876"/>
<dbReference type="HOGENOM" id="CLU_037960_1_0_1"/>
<dbReference type="InParanoid" id="Q8N0Z9"/>
<dbReference type="OMA" id="QCWAEMS"/>
<dbReference type="OrthoDB" id="9043395at2759"/>
<dbReference type="PAN-GO" id="Q8N0Z9">
    <property type="GO annotations" value="4 GO annotations based on evolutionary models"/>
</dbReference>
<dbReference type="PhylomeDB" id="Q8N0Z9"/>
<dbReference type="TreeFam" id="TF334050"/>
<dbReference type="PathwayCommons" id="Q8N0Z9"/>
<dbReference type="BioGRID-ORCS" id="54621">
    <property type="hits" value="16 hits in 1151 CRISPR screens"/>
</dbReference>
<dbReference type="ChiTaRS" id="VSIG10">
    <property type="organism name" value="human"/>
</dbReference>
<dbReference type="GenomeRNAi" id="54621"/>
<dbReference type="Pharos" id="Q8N0Z9">
    <property type="development level" value="Tdark"/>
</dbReference>
<dbReference type="PRO" id="PR:Q8N0Z9"/>
<dbReference type="Proteomes" id="UP000005640">
    <property type="component" value="Chromosome 12"/>
</dbReference>
<dbReference type="RNAct" id="Q8N0Z9">
    <property type="molecule type" value="protein"/>
</dbReference>
<dbReference type="Bgee" id="ENSG00000176834">
    <property type="expression patterns" value="Expressed in buccal mucosa cell and 167 other cell types or tissues"/>
</dbReference>
<dbReference type="ExpressionAtlas" id="Q8N0Z9">
    <property type="expression patterns" value="baseline and differential"/>
</dbReference>
<dbReference type="GO" id="GO:0005911">
    <property type="term" value="C:cell-cell junction"/>
    <property type="evidence" value="ECO:0000318"/>
    <property type="project" value="GO_Central"/>
</dbReference>
<dbReference type="GO" id="GO:0005886">
    <property type="term" value="C:plasma membrane"/>
    <property type="evidence" value="ECO:0000318"/>
    <property type="project" value="GO_Central"/>
</dbReference>
<dbReference type="GO" id="GO:0050839">
    <property type="term" value="F:cell adhesion molecule binding"/>
    <property type="evidence" value="ECO:0000318"/>
    <property type="project" value="GO_Central"/>
</dbReference>
<dbReference type="GO" id="GO:0098609">
    <property type="term" value="P:cell-cell adhesion"/>
    <property type="evidence" value="ECO:0000318"/>
    <property type="project" value="GO_Central"/>
</dbReference>
<dbReference type="GO" id="GO:0007416">
    <property type="term" value="P:synapse assembly"/>
    <property type="evidence" value="ECO:0000318"/>
    <property type="project" value="GO_Central"/>
</dbReference>
<dbReference type="CDD" id="cd00096">
    <property type="entry name" value="Ig"/>
    <property type="match status" value="2"/>
</dbReference>
<dbReference type="CDD" id="cd00099">
    <property type="entry name" value="IgV"/>
    <property type="match status" value="1"/>
</dbReference>
<dbReference type="Gene3D" id="2.60.40.10">
    <property type="entry name" value="Immunoglobulins"/>
    <property type="match status" value="3"/>
</dbReference>
<dbReference type="InterPro" id="IPR007110">
    <property type="entry name" value="Ig-like_dom"/>
</dbReference>
<dbReference type="InterPro" id="IPR036179">
    <property type="entry name" value="Ig-like_dom_sf"/>
</dbReference>
<dbReference type="InterPro" id="IPR013783">
    <property type="entry name" value="Ig-like_fold"/>
</dbReference>
<dbReference type="InterPro" id="IPR003599">
    <property type="entry name" value="Ig_sub"/>
</dbReference>
<dbReference type="InterPro" id="IPR003598">
    <property type="entry name" value="Ig_sub2"/>
</dbReference>
<dbReference type="InterPro" id="IPR013106">
    <property type="entry name" value="Ig_V-set"/>
</dbReference>
<dbReference type="InterPro" id="IPR051170">
    <property type="entry name" value="Neural/epithelial_adhesion"/>
</dbReference>
<dbReference type="PANTHER" id="PTHR12231">
    <property type="entry name" value="CTX-RELATED TYPE I TRANSMEMBRANE PROTEIN"/>
    <property type="match status" value="1"/>
</dbReference>
<dbReference type="PANTHER" id="PTHR12231:SF253">
    <property type="entry name" value="DPR-INTERACTING PROTEIN ETA, ISOFORM B-RELATED"/>
    <property type="match status" value="1"/>
</dbReference>
<dbReference type="Pfam" id="PF13927">
    <property type="entry name" value="Ig_3"/>
    <property type="match status" value="2"/>
</dbReference>
<dbReference type="Pfam" id="PF07686">
    <property type="entry name" value="V-set"/>
    <property type="match status" value="1"/>
</dbReference>
<dbReference type="SMART" id="SM00409">
    <property type="entry name" value="IG"/>
    <property type="match status" value="3"/>
</dbReference>
<dbReference type="SMART" id="SM00408">
    <property type="entry name" value="IGc2"/>
    <property type="match status" value="3"/>
</dbReference>
<dbReference type="SMART" id="SM00406">
    <property type="entry name" value="IGv"/>
    <property type="match status" value="2"/>
</dbReference>
<dbReference type="SUPFAM" id="SSF48726">
    <property type="entry name" value="Immunoglobulin"/>
    <property type="match status" value="4"/>
</dbReference>
<dbReference type="PROSITE" id="PS50835">
    <property type="entry name" value="IG_LIKE"/>
    <property type="match status" value="4"/>
</dbReference>
<evidence type="ECO:0000255" key="1"/>
<evidence type="ECO:0000255" key="2">
    <source>
        <dbReference type="PROSITE-ProRule" id="PRU00114"/>
    </source>
</evidence>
<evidence type="ECO:0000256" key="3">
    <source>
        <dbReference type="SAM" id="MobiDB-lite"/>
    </source>
</evidence>
<evidence type="ECO:0000269" key="4">
    <source>
    </source>
</evidence>
<evidence type="ECO:0000303" key="5">
    <source>
    </source>
</evidence>
<evidence type="ECO:0000305" key="6"/>
<proteinExistence type="evidence at protein level"/>
<organism>
    <name type="scientific">Homo sapiens</name>
    <name type="common">Human</name>
    <dbReference type="NCBI Taxonomy" id="9606"/>
    <lineage>
        <taxon>Eukaryota</taxon>
        <taxon>Metazoa</taxon>
        <taxon>Chordata</taxon>
        <taxon>Craniata</taxon>
        <taxon>Vertebrata</taxon>
        <taxon>Euteleostomi</taxon>
        <taxon>Mammalia</taxon>
        <taxon>Eutheria</taxon>
        <taxon>Euarchontoglires</taxon>
        <taxon>Primates</taxon>
        <taxon>Haplorrhini</taxon>
        <taxon>Catarrhini</taxon>
        <taxon>Hominidae</taxon>
        <taxon>Homo</taxon>
    </lineage>
</organism>
<name>VSI10_HUMAN</name>
<keyword id="KW-0025">Alternative splicing</keyword>
<keyword id="KW-1015">Disulfide bond</keyword>
<keyword id="KW-0325">Glycoprotein</keyword>
<keyword id="KW-0393">Immunoglobulin domain</keyword>
<keyword id="KW-0472">Membrane</keyword>
<keyword id="KW-1267">Proteomics identification</keyword>
<keyword id="KW-1185">Reference proteome</keyword>
<keyword id="KW-0677">Repeat</keyword>
<keyword id="KW-0732">Signal</keyword>
<keyword id="KW-0812">Transmembrane</keyword>
<keyword id="KW-1133">Transmembrane helix</keyword>
<protein>
    <recommendedName>
        <fullName>V-set and immunoglobulin domain-containing protein 10</fullName>
    </recommendedName>
</protein>
<feature type="signal peptide" evidence="1">
    <location>
        <begin position="1"/>
        <end position="30"/>
    </location>
</feature>
<feature type="chain" id="PRO_0000345115" description="V-set and immunoglobulin domain-containing protein 10">
    <location>
        <begin position="31"/>
        <end position="540"/>
    </location>
</feature>
<feature type="topological domain" description="Extracellular" evidence="1">
    <location>
        <begin position="31"/>
        <end position="413"/>
    </location>
</feature>
<feature type="transmembrane region" description="Helical" evidence="1">
    <location>
        <begin position="414"/>
        <end position="434"/>
    </location>
</feature>
<feature type="topological domain" description="Cytoplasmic" evidence="1">
    <location>
        <begin position="435"/>
        <end position="540"/>
    </location>
</feature>
<feature type="domain" description="Ig-like C2-type 1">
    <location>
        <begin position="31"/>
        <end position="119"/>
    </location>
</feature>
<feature type="domain" description="Ig-like C2-type 2">
    <location>
        <begin position="123"/>
        <end position="215"/>
    </location>
</feature>
<feature type="domain" description="Ig-like C2-type 3">
    <location>
        <begin position="223"/>
        <end position="309"/>
    </location>
</feature>
<feature type="domain" description="Ig-like C2-type 4">
    <location>
        <begin position="311"/>
        <end position="404"/>
    </location>
</feature>
<feature type="region of interest" description="Disordered" evidence="3">
    <location>
        <begin position="461"/>
        <end position="500"/>
    </location>
</feature>
<feature type="region of interest" description="Disordered" evidence="3">
    <location>
        <begin position="513"/>
        <end position="540"/>
    </location>
</feature>
<feature type="compositionally biased region" description="Acidic residues" evidence="3">
    <location>
        <begin position="461"/>
        <end position="477"/>
    </location>
</feature>
<feature type="compositionally biased region" description="Basic and acidic residues" evidence="3">
    <location>
        <begin position="482"/>
        <end position="500"/>
    </location>
</feature>
<feature type="compositionally biased region" description="Acidic residues" evidence="3">
    <location>
        <begin position="521"/>
        <end position="534"/>
    </location>
</feature>
<feature type="glycosylation site" description="N-linked (GlcNAc...) asparagine" evidence="1">
    <location>
        <position position="39"/>
    </location>
</feature>
<feature type="glycosylation site" description="N-linked (GlcNAc...) asparagine" evidence="1">
    <location>
        <position position="46"/>
    </location>
</feature>
<feature type="glycosylation site" description="N-linked (GlcNAc...) asparagine" evidence="1">
    <location>
        <position position="70"/>
    </location>
</feature>
<feature type="glycosylation site" description="N-linked (GlcNAc...) asparagine" evidence="1">
    <location>
        <position position="108"/>
    </location>
</feature>
<feature type="glycosylation site" description="N-linked (GlcNAc...) asparagine" evidence="1">
    <location>
        <position position="138"/>
    </location>
</feature>
<feature type="glycosylation site" description="N-linked (GlcNAc...) asparagine" evidence="1">
    <location>
        <position position="171"/>
    </location>
</feature>
<feature type="glycosylation site" description="N-linked (GlcNAc...) asparagine" evidence="1">
    <location>
        <position position="180"/>
    </location>
</feature>
<feature type="glycosylation site" description="N-linked (GlcNAc...) asparagine" evidence="1">
    <location>
        <position position="198"/>
    </location>
</feature>
<feature type="glycosylation site" description="N-linked (GlcNAc...) asparagine" evidence="1">
    <location>
        <position position="326"/>
    </location>
</feature>
<feature type="disulfide bond" evidence="2">
    <location>
        <begin position="44"/>
        <end position="103"/>
    </location>
</feature>
<feature type="disulfide bond" evidence="2">
    <location>
        <begin position="153"/>
        <end position="201"/>
    </location>
</feature>
<feature type="disulfide bond" evidence="2">
    <location>
        <begin position="245"/>
        <end position="290"/>
    </location>
</feature>
<feature type="disulfide bond" evidence="2">
    <location>
        <begin position="331"/>
        <end position="388"/>
    </location>
</feature>
<feature type="splice variant" id="VSP_034915" description="In isoform 2." evidence="5">
    <location>
        <begin position="463"/>
        <end position="464"/>
    </location>
</feature>
<feature type="sequence variant" id="VAR_045692" description="In dbSNP:rs9668527.">
    <original>V</original>
    <variation>M</variation>
    <location>
        <position position="333"/>
    </location>
</feature>
<feature type="sequence variant" id="VAR_045693" description="In dbSNP:rs7307331." evidence="4">
    <original>H</original>
    <variation>Y</variation>
    <location>
        <position position="435"/>
    </location>
</feature>
<feature type="sequence conflict" description="In Ref. 1; BAA91322." evidence="6" ref="1">
    <original>A</original>
    <variation>T</variation>
    <location>
        <position position="25"/>
    </location>
</feature>
<feature type="sequence conflict" description="In Ref. 1; BAA91322." evidence="6" ref="1">
    <original>GEVH</original>
    <variation>WRSY</variation>
    <location>
        <begin position="34"/>
        <end position="37"/>
    </location>
</feature>
<comment type="subcellular location">
    <subcellularLocation>
        <location evidence="6">Membrane</location>
        <topology evidence="6">Single-pass type I membrane protein</topology>
    </subcellularLocation>
</comment>
<comment type="alternative products">
    <event type="alternative splicing"/>
    <isoform>
        <id>Q8N0Z9-1</id>
        <name>1</name>
        <sequence type="displayed"/>
    </isoform>
    <isoform>
        <id>Q8N0Z9-2</id>
        <name>2</name>
        <sequence type="described" ref="VSP_034915"/>
    </isoform>
</comment>
<sequence length="540" mass="59217">MAAGGSAPEPRVLVCLGALLAGWVAVGLEAVVIGEVHENVTLHCGNISGLRGQVTWYRNNSEPVFLLSSNSSLRPAEPRFSLVDATSLHIESLSLGDEGIYTCQEILNVTQWFQVWLQVASGPYQIEVHIVATGTLPNGTLYAARGSQVDFSCNSSSRPPPVVEWWFQALNSSSESFGHNLTVNFFSLLLISPNLQGNYTCLALNQLSKRHRKVTTELLVYYPPPSAPQCWAQMASGSFMLQLTCRWDGGYPDPDFLWIEEPGGVIVGKSKLGVEMLSESQLSDGKKFKCVTSHIVGPESGASCMVQIRGPSLLSEPMKTCFTGGNVTLTCQVSGAYPPAKILWLRNLTQPEVIIQPSSRHLITQDGQNSTLTIHNCSQDLDEGYYICRADSPVGVREMEIWLSVKEPLNIGGIVGTIVSLLLLGLAIISGLLLHYSPVFCWKVGNTSRGQNMDDVMVLVDSEEEEEEEEEEEEDAAVGEQEGAREREELPKEIPKQDHIHRVTALVNGNIEQMGNGFQDLQDDSSEEQSDIVQEEDRPV</sequence>
<accession>Q8N0Z9</accession>
<accession>Q9NWQ7</accession>